<organism>
    <name type="scientific">Yersinia pestis</name>
    <dbReference type="NCBI Taxonomy" id="632"/>
    <lineage>
        <taxon>Bacteria</taxon>
        <taxon>Pseudomonadati</taxon>
        <taxon>Pseudomonadota</taxon>
        <taxon>Gammaproteobacteria</taxon>
        <taxon>Enterobacterales</taxon>
        <taxon>Yersiniaceae</taxon>
        <taxon>Yersinia</taxon>
    </lineage>
</organism>
<proteinExistence type="inferred from homology"/>
<evidence type="ECO:0000250" key="1"/>
<evidence type="ECO:0000255" key="2">
    <source>
        <dbReference type="HAMAP-Rule" id="MF_00340"/>
    </source>
</evidence>
<evidence type="ECO:0000256" key="3">
    <source>
        <dbReference type="SAM" id="MobiDB-lite"/>
    </source>
</evidence>
<evidence type="ECO:0000305" key="4"/>
<protein>
    <recommendedName>
        <fullName evidence="2">Large ribosomal subunit protein bL32</fullName>
    </recommendedName>
    <alternativeName>
        <fullName evidence="4">50S ribosomal protein L32</fullName>
    </alternativeName>
</protein>
<reference key="1">
    <citation type="journal article" date="2001" name="Nature">
        <title>Genome sequence of Yersinia pestis, the causative agent of plague.</title>
        <authorList>
            <person name="Parkhill J."/>
            <person name="Wren B.W."/>
            <person name="Thomson N.R."/>
            <person name="Titball R.W."/>
            <person name="Holden M.T.G."/>
            <person name="Prentice M.B."/>
            <person name="Sebaihia M."/>
            <person name="James K.D."/>
            <person name="Churcher C.M."/>
            <person name="Mungall K.L."/>
            <person name="Baker S."/>
            <person name="Basham D."/>
            <person name="Bentley S.D."/>
            <person name="Brooks K."/>
            <person name="Cerdeno-Tarraga A.-M."/>
            <person name="Chillingworth T."/>
            <person name="Cronin A."/>
            <person name="Davies R.M."/>
            <person name="Davis P."/>
            <person name="Dougan G."/>
            <person name="Feltwell T."/>
            <person name="Hamlin N."/>
            <person name="Holroyd S."/>
            <person name="Jagels K."/>
            <person name="Karlyshev A.V."/>
            <person name="Leather S."/>
            <person name="Moule S."/>
            <person name="Oyston P.C.F."/>
            <person name="Quail M.A."/>
            <person name="Rutherford K.M."/>
            <person name="Simmonds M."/>
            <person name="Skelton J."/>
            <person name="Stevens K."/>
            <person name="Whitehead S."/>
            <person name="Barrell B.G."/>
        </authorList>
    </citation>
    <scope>NUCLEOTIDE SEQUENCE [LARGE SCALE GENOMIC DNA]</scope>
    <source>
        <strain>CO-92 / Biovar Orientalis</strain>
    </source>
</reference>
<reference key="2">
    <citation type="journal article" date="2002" name="J. Bacteriol.">
        <title>Genome sequence of Yersinia pestis KIM.</title>
        <authorList>
            <person name="Deng W."/>
            <person name="Burland V."/>
            <person name="Plunkett G. III"/>
            <person name="Boutin A."/>
            <person name="Mayhew G.F."/>
            <person name="Liss P."/>
            <person name="Perna N.T."/>
            <person name="Rose D.J."/>
            <person name="Mau B."/>
            <person name="Zhou S."/>
            <person name="Schwartz D.C."/>
            <person name="Fetherston J.D."/>
            <person name="Lindler L.E."/>
            <person name="Brubaker R.R."/>
            <person name="Plano G.V."/>
            <person name="Straley S.C."/>
            <person name="McDonough K.A."/>
            <person name="Nilles M.L."/>
            <person name="Matson J.S."/>
            <person name="Blattner F.R."/>
            <person name="Perry R.D."/>
        </authorList>
    </citation>
    <scope>NUCLEOTIDE SEQUENCE [LARGE SCALE GENOMIC DNA]</scope>
    <source>
        <strain>KIM10+ / Biovar Mediaevalis</strain>
    </source>
</reference>
<reference key="3">
    <citation type="journal article" date="2004" name="DNA Res.">
        <title>Complete genome sequence of Yersinia pestis strain 91001, an isolate avirulent to humans.</title>
        <authorList>
            <person name="Song Y."/>
            <person name="Tong Z."/>
            <person name="Wang J."/>
            <person name="Wang L."/>
            <person name="Guo Z."/>
            <person name="Han Y."/>
            <person name="Zhang J."/>
            <person name="Pei D."/>
            <person name="Zhou D."/>
            <person name="Qin H."/>
            <person name="Pang X."/>
            <person name="Han Y."/>
            <person name="Zhai J."/>
            <person name="Li M."/>
            <person name="Cui B."/>
            <person name="Qi Z."/>
            <person name="Jin L."/>
            <person name="Dai R."/>
            <person name="Chen F."/>
            <person name="Li S."/>
            <person name="Ye C."/>
            <person name="Du Z."/>
            <person name="Lin W."/>
            <person name="Wang J."/>
            <person name="Yu J."/>
            <person name="Yang H."/>
            <person name="Wang J."/>
            <person name="Huang P."/>
            <person name="Yang R."/>
        </authorList>
    </citation>
    <scope>NUCLEOTIDE SEQUENCE [LARGE SCALE GENOMIC DNA]</scope>
    <source>
        <strain>91001 / Biovar Mediaevalis</strain>
    </source>
</reference>
<keyword id="KW-1185">Reference proteome</keyword>
<keyword id="KW-0687">Ribonucleoprotein</keyword>
<keyword id="KW-0689">Ribosomal protein</keyword>
<accession>Q8ZFT9</accession>
<accession>Q0WGI2</accession>
<feature type="initiator methionine" description="Removed" evidence="1">
    <location>
        <position position="1"/>
    </location>
</feature>
<feature type="chain" id="PRO_0000172444" description="Large ribosomal subunit protein bL32">
    <location>
        <begin position="2"/>
        <end position="55"/>
    </location>
</feature>
<feature type="region of interest" description="Disordered" evidence="3">
    <location>
        <begin position="1"/>
        <end position="27"/>
    </location>
</feature>
<sequence>MAVQQNKPTRSKRGMRRSHDALTTATLSVDKTSGETHLRHHITADGFYRGRKVIG</sequence>
<name>RL32_YERPE</name>
<gene>
    <name evidence="2" type="primary">rpmF</name>
    <name type="ordered locus">YPO1595</name>
    <name type="ordered locus">y1753</name>
    <name type="ordered locus">YP_2259</name>
</gene>
<comment type="similarity">
    <text evidence="2">Belongs to the bacterial ribosomal protein bL32 family.</text>
</comment>
<dbReference type="EMBL" id="AL590842">
    <property type="protein sequence ID" value="CAL20240.1"/>
    <property type="molecule type" value="Genomic_DNA"/>
</dbReference>
<dbReference type="EMBL" id="AE009952">
    <property type="protein sequence ID" value="AAM85321.1"/>
    <property type="molecule type" value="Genomic_DNA"/>
</dbReference>
<dbReference type="EMBL" id="AE017042">
    <property type="protein sequence ID" value="AAS62465.1"/>
    <property type="molecule type" value="Genomic_DNA"/>
</dbReference>
<dbReference type="PIR" id="AF0194">
    <property type="entry name" value="AF0194"/>
</dbReference>
<dbReference type="RefSeq" id="WP_002210931.1">
    <property type="nucleotide sequence ID" value="NZ_WUCM01000105.1"/>
</dbReference>
<dbReference type="RefSeq" id="YP_002346606.1">
    <property type="nucleotide sequence ID" value="NC_003143.1"/>
</dbReference>
<dbReference type="SMR" id="Q8ZFT9"/>
<dbReference type="STRING" id="214092.YPO1595"/>
<dbReference type="PaxDb" id="214092-YPO1595"/>
<dbReference type="DNASU" id="1146700"/>
<dbReference type="EnsemblBacteria" id="AAS62465">
    <property type="protein sequence ID" value="AAS62465"/>
    <property type="gene ID" value="YP_2259"/>
</dbReference>
<dbReference type="GeneID" id="97455787"/>
<dbReference type="KEGG" id="ype:YPO1595"/>
<dbReference type="KEGG" id="ypk:y1753"/>
<dbReference type="KEGG" id="ypm:YP_2259"/>
<dbReference type="PATRIC" id="fig|1028802.3.peg.358"/>
<dbReference type="eggNOG" id="COG0333">
    <property type="taxonomic scope" value="Bacteria"/>
</dbReference>
<dbReference type="HOGENOM" id="CLU_129084_2_1_6"/>
<dbReference type="OMA" id="GMHRAHD"/>
<dbReference type="OrthoDB" id="9801927at2"/>
<dbReference type="Proteomes" id="UP000000815">
    <property type="component" value="Chromosome"/>
</dbReference>
<dbReference type="Proteomes" id="UP000001019">
    <property type="component" value="Chromosome"/>
</dbReference>
<dbReference type="Proteomes" id="UP000002490">
    <property type="component" value="Chromosome"/>
</dbReference>
<dbReference type="GO" id="GO:0022625">
    <property type="term" value="C:cytosolic large ribosomal subunit"/>
    <property type="evidence" value="ECO:0000318"/>
    <property type="project" value="GO_Central"/>
</dbReference>
<dbReference type="GO" id="GO:0003735">
    <property type="term" value="F:structural constituent of ribosome"/>
    <property type="evidence" value="ECO:0000318"/>
    <property type="project" value="GO_Central"/>
</dbReference>
<dbReference type="GO" id="GO:0006412">
    <property type="term" value="P:translation"/>
    <property type="evidence" value="ECO:0007669"/>
    <property type="project" value="UniProtKB-UniRule"/>
</dbReference>
<dbReference type="HAMAP" id="MF_00340">
    <property type="entry name" value="Ribosomal_bL32"/>
    <property type="match status" value="1"/>
</dbReference>
<dbReference type="InterPro" id="IPR002677">
    <property type="entry name" value="Ribosomal_bL32"/>
</dbReference>
<dbReference type="InterPro" id="IPR044957">
    <property type="entry name" value="Ribosomal_bL32_bact"/>
</dbReference>
<dbReference type="InterPro" id="IPR011332">
    <property type="entry name" value="Ribosomal_zn-bd"/>
</dbReference>
<dbReference type="NCBIfam" id="TIGR01031">
    <property type="entry name" value="rpmF_bact"/>
    <property type="match status" value="1"/>
</dbReference>
<dbReference type="PANTHER" id="PTHR35534">
    <property type="entry name" value="50S RIBOSOMAL PROTEIN L32"/>
    <property type="match status" value="1"/>
</dbReference>
<dbReference type="PANTHER" id="PTHR35534:SF1">
    <property type="entry name" value="LARGE RIBOSOMAL SUBUNIT PROTEIN BL32"/>
    <property type="match status" value="1"/>
</dbReference>
<dbReference type="Pfam" id="PF01783">
    <property type="entry name" value="Ribosomal_L32p"/>
    <property type="match status" value="1"/>
</dbReference>
<dbReference type="SUPFAM" id="SSF57829">
    <property type="entry name" value="Zn-binding ribosomal proteins"/>
    <property type="match status" value="1"/>
</dbReference>